<organism>
    <name type="scientific">Human cytomegalovirus (strain AD169)</name>
    <name type="common">HHV-5</name>
    <name type="synonym">Human herpesvirus 5</name>
    <dbReference type="NCBI Taxonomy" id="10360"/>
    <lineage>
        <taxon>Viruses</taxon>
        <taxon>Duplodnaviria</taxon>
        <taxon>Heunggongvirae</taxon>
        <taxon>Peploviricota</taxon>
        <taxon>Herviviricetes</taxon>
        <taxon>Herpesvirales</taxon>
        <taxon>Orthoherpesviridae</taxon>
        <taxon>Betaherpesvirinae</taxon>
        <taxon>Cytomegalovirus</taxon>
        <taxon>Cytomegalovirus humanbeta5</taxon>
        <taxon>Human cytomegalovirus</taxon>
    </lineage>
</organism>
<dbReference type="EMBL" id="X17403">
    <property type="protein sequence ID" value="CAA35266.1"/>
    <property type="molecule type" value="Genomic_DNA"/>
</dbReference>
<dbReference type="EMBL" id="X04650">
    <property type="protein sequence ID" value="CAB37119.1"/>
    <property type="molecule type" value="Genomic_DNA"/>
</dbReference>
<dbReference type="PIR" id="I27216">
    <property type="entry name" value="QQBED9"/>
</dbReference>
<dbReference type="Proteomes" id="UP000008991">
    <property type="component" value="Segment"/>
</dbReference>
<reference key="1">
    <citation type="journal article" date="1986" name="J. Mol. Biol.">
        <title>Sequence of the short unique region, short repeats, and part of the long repeats of human cytomegalovirus.</title>
        <authorList>
            <person name="Weston K.M."/>
            <person name="Barrell B.G."/>
        </authorList>
    </citation>
    <scope>NUCLEOTIDE SEQUENCE [GENOMIC DNA]</scope>
</reference>
<reference key="2">
    <citation type="journal article" date="1990" name="Curr. Top. Microbiol. Immunol.">
        <title>Analysis of the protein-coding content of the sequence of human cytomegalovirus strain AD169.</title>
        <authorList>
            <person name="Chee M.S."/>
            <person name="Bankier A.T."/>
            <person name="Beck S."/>
            <person name="Bohni R."/>
            <person name="Brown C.M."/>
            <person name="Cerny R."/>
            <person name="Horsnell T."/>
            <person name="Hutchison C.A. III"/>
            <person name="Kouzarides T."/>
            <person name="Martignetti J.A."/>
            <person name="Preddie E."/>
            <person name="Satchwell S.C."/>
            <person name="Tomlinson P."/>
            <person name="Weston K.M."/>
            <person name="Barrell B.G."/>
        </authorList>
    </citation>
    <scope>NUCLEOTIDE SEQUENCE [LARGE SCALE GENOMIC DNA]</scope>
</reference>
<evidence type="ECO:0000256" key="1">
    <source>
        <dbReference type="SAM" id="MobiDB-lite"/>
    </source>
</evidence>
<feature type="chain" id="PRO_0000115293" description="Uncharacterized protein HHLF3">
    <location>
        <begin position="1"/>
        <end position="137"/>
    </location>
</feature>
<feature type="region of interest" description="Disordered" evidence="1">
    <location>
        <begin position="67"/>
        <end position="87"/>
    </location>
</feature>
<feature type="compositionally biased region" description="Basic and acidic residues" evidence="1">
    <location>
        <begin position="70"/>
        <end position="85"/>
    </location>
</feature>
<accession>P09697</accession>
<proteinExistence type="predicted"/>
<organismHost>
    <name type="scientific">Homo sapiens</name>
    <name type="common">Human</name>
    <dbReference type="NCBI Taxonomy" id="9606"/>
</organismHost>
<name>US33_HCMVA</name>
<sequence>VHRRRIAPRRCSEAKCRRRFGFMFQRSAKSRWFDVVLTFVPSGFVMGHVAIISVTTDVLGPRHVKRKSERQHQRVHHELPHDKPRQSQRVMHPHAFGMRAVSQFLVTHPLGEPEAHGAFAPETPVGTRSPLRSYAIL</sequence>
<gene>
    <name type="primary">US33</name>
</gene>
<protein>
    <recommendedName>
        <fullName>Uncharacterized protein HHLF3</fullName>
    </recommendedName>
</protein>